<keyword id="KW-0961">Cell wall biogenesis/degradation</keyword>
<keyword id="KW-0328">Glycosyltransferase</keyword>
<keyword id="KW-0333">Golgi apparatus</keyword>
<keyword id="KW-0472">Membrane</keyword>
<keyword id="KW-1185">Reference proteome</keyword>
<keyword id="KW-0808">Transferase</keyword>
<keyword id="KW-0812">Transmembrane</keyword>
<keyword id="KW-1133">Transmembrane helix</keyword>
<name>CSLC7_ORYSJ</name>
<sequence length="688" mass="76580">MAPSWWGRSGGGGVGNGGGTPVVVKMENPNWSISEVEAAEVAPGSPAGAGKAGRGKNARQITWVLLLKAHRAAGRLTGAASAALAVASAARRRVASGRTDADAAPGESTALRARSYGCIRVSLVLSLLLLAVEVAAYLQGWHLEEVASLLAVDGLFAASYAGWMRLRLDYLAPPLQFLTNACVALFMVQSIDRLVLCLGCFWIRFKGIKPVPQAAAAGKPDVEAGAGDYPMVLVQMPMCNEREVYQQSIGAVCNLDWPKSNFLVQVLDDSDDATTSALIKEEVEKWQREGVRIIYRHRVIRDGYKAGNLKSAMNCSYVKDYEFVVIFDADFQPQADFLKRTVPHFKGKDDVGLVQARWSFVNKDENLLTRLQNVNLCFHFEVEQQVNGAFLNFFGFNGTAGVWRIKALEDSGGWMERTTVEDMDIAVRAHLKGWKFVFLNDVECQCELPESYEAYRKQQHRWHSGPMQLFRLCFVDIIKSKIGFWKKFNLIFLFFLLRKLILPFYSFTLFCVILPMTMFVPEAELPAWVVCYIPATMSILNILPAPKSFPFIVPYLLFENTMSVTKFNAMISGLFQLGSAYEWVVTKKSGRSSEGDLVGLVEKHSKQQRVGSAPNLDALTKEESNPKKDSKKKKHNRIYRKELALSFLLLTAAARSLLSAQGIHFYFLLFQGVSFLVVGLDLIGEQVE</sequence>
<reference key="1">
    <citation type="journal article" date="2005" name="Mol. Genet. Genomics">
        <title>A fine physical map of the rice chromosome 5.</title>
        <authorList>
            <person name="Cheng C.-H."/>
            <person name="Chung M.C."/>
            <person name="Liu S.-M."/>
            <person name="Chen S.-K."/>
            <person name="Kao F.Y."/>
            <person name="Lin S.-J."/>
            <person name="Hsiao S.-H."/>
            <person name="Tseng I.C."/>
            <person name="Hsing Y.-I.C."/>
            <person name="Wu H.-P."/>
            <person name="Chen C.-S."/>
            <person name="Shaw J.-F."/>
            <person name="Wu J."/>
            <person name="Matsumoto T."/>
            <person name="Sasaki T."/>
            <person name="Chen H.-C."/>
            <person name="Chow T.-Y."/>
        </authorList>
    </citation>
    <scope>NUCLEOTIDE SEQUENCE [LARGE SCALE GENOMIC DNA]</scope>
    <source>
        <strain>cv. Nipponbare</strain>
    </source>
</reference>
<reference key="2">
    <citation type="journal article" date="2005" name="Nature">
        <title>The map-based sequence of the rice genome.</title>
        <authorList>
            <consortium name="International rice genome sequencing project (IRGSP)"/>
        </authorList>
    </citation>
    <scope>NUCLEOTIDE SEQUENCE [LARGE SCALE GENOMIC DNA]</scope>
    <source>
        <strain>cv. Nipponbare</strain>
    </source>
</reference>
<reference key="3">
    <citation type="journal article" date="2008" name="Nucleic Acids Res.">
        <title>The rice annotation project database (RAP-DB): 2008 update.</title>
        <authorList>
            <consortium name="The rice annotation project (RAP)"/>
        </authorList>
    </citation>
    <scope>GENOME REANNOTATION</scope>
    <source>
        <strain>cv. Nipponbare</strain>
    </source>
</reference>
<reference key="4">
    <citation type="journal article" date="2013" name="Rice">
        <title>Improvement of the Oryza sativa Nipponbare reference genome using next generation sequence and optical map data.</title>
        <authorList>
            <person name="Kawahara Y."/>
            <person name="de la Bastide M."/>
            <person name="Hamilton J.P."/>
            <person name="Kanamori H."/>
            <person name="McCombie W.R."/>
            <person name="Ouyang S."/>
            <person name="Schwartz D.C."/>
            <person name="Tanaka T."/>
            <person name="Wu J."/>
            <person name="Zhou S."/>
            <person name="Childs K.L."/>
            <person name="Davidson R.M."/>
            <person name="Lin H."/>
            <person name="Quesada-Ocampo L."/>
            <person name="Vaillancourt B."/>
            <person name="Sakai H."/>
            <person name="Lee S.S."/>
            <person name="Kim J."/>
            <person name="Numa H."/>
            <person name="Itoh T."/>
            <person name="Buell C.R."/>
            <person name="Matsumoto T."/>
        </authorList>
    </citation>
    <scope>GENOME REANNOTATION</scope>
    <source>
        <strain>cv. Nipponbare</strain>
    </source>
</reference>
<reference key="5">
    <citation type="submission" date="2006-10" db="EMBL/GenBank/DDBJ databases">
        <title>Oryza sativa full length cDNA.</title>
        <authorList>
            <consortium name="The rice full-length cDNA consortium"/>
        </authorList>
    </citation>
    <scope>NUCLEOTIDE SEQUENCE [LARGE SCALE MRNA]</scope>
    <source>
        <strain>cv. Nipponbare</strain>
    </source>
</reference>
<reference key="6">
    <citation type="journal article" date="2002" name="Plant Physiol.">
        <title>Cellulose synthase-like genes of rice.</title>
        <authorList>
            <person name="Hazen S.P."/>
            <person name="Scott-Craig J.S."/>
            <person name="Walton J.D."/>
        </authorList>
    </citation>
    <scope>NUCLEOTIDE SEQUENCE [MRNA] OF 437-688</scope>
</reference>
<gene>
    <name type="primary">CSLC7</name>
    <name type="ordered locus">Os05g0510800</name>
    <name type="ordered locus">LOC_Os05g43530</name>
    <name type="ORF">OJ1005_B11.7</name>
</gene>
<evidence type="ECO:0000250" key="1"/>
<evidence type="ECO:0000255" key="2"/>
<evidence type="ECO:0000256" key="3">
    <source>
        <dbReference type="SAM" id="MobiDB-lite"/>
    </source>
</evidence>
<evidence type="ECO:0000305" key="4"/>
<comment type="function">
    <text evidence="1">Probable beta-1,4-glucan synthase rather involved in the synthesis of the xyloglucan backbone than cellulose. Seems to work simultaneously with xyloglucan 6-xylosyltransferase. Xyloglucan is a noncellulosic polysaccharides of plant cell wall and consists of a glucan backbone substituted by xylose, galactose and fucose (By similarity).</text>
</comment>
<comment type="subcellular location">
    <subcellularLocation>
        <location evidence="4">Golgi apparatus membrane</location>
        <topology evidence="4">Multi-pass membrane protein</topology>
    </subcellularLocation>
</comment>
<comment type="similarity">
    <text evidence="4">Belongs to the glycosyltransferase 2 family. Plant cellulose synthase-like C subfamily.</text>
</comment>
<comment type="sequence caution" evidence="4">
    <conflict type="erroneous gene model prediction">
        <sequence resource="EMBL-CDS" id="BAF17926"/>
    </conflict>
</comment>
<protein>
    <recommendedName>
        <fullName>Probable xyloglucan glycosyltransferase 7</fullName>
        <ecNumber>2.4.1.-</ecNumber>
    </recommendedName>
    <alternativeName>
        <fullName>Cellulose synthase-like protein C7</fullName>
    </alternativeName>
    <alternativeName>
        <fullName>OsCslC7</fullName>
    </alternativeName>
</protein>
<accession>Q6L538</accession>
<accession>A0A0P0WPL0</accession>
<accession>Q0DGU7</accession>
<accession>Q8W1N7</accession>
<proteinExistence type="evidence at transcript level"/>
<feature type="chain" id="PRO_0000319386" description="Probable xyloglucan glycosyltransferase 7">
    <location>
        <begin position="1"/>
        <end position="688"/>
    </location>
</feature>
<feature type="transmembrane region" description="Helical" evidence="2">
    <location>
        <begin position="121"/>
        <end position="141"/>
    </location>
</feature>
<feature type="transmembrane region" description="Helical" evidence="2">
    <location>
        <begin position="183"/>
        <end position="203"/>
    </location>
</feature>
<feature type="transmembrane region" description="Helical" evidence="2">
    <location>
        <begin position="500"/>
        <end position="520"/>
    </location>
</feature>
<feature type="transmembrane region" description="Helical" evidence="2">
    <location>
        <begin position="525"/>
        <end position="545"/>
    </location>
</feature>
<feature type="transmembrane region" description="Helical" evidence="2">
    <location>
        <begin position="638"/>
        <end position="657"/>
    </location>
</feature>
<feature type="transmembrane region" description="Helical" evidence="2">
    <location>
        <begin position="663"/>
        <end position="683"/>
    </location>
</feature>
<feature type="region of interest" description="Disordered" evidence="3">
    <location>
        <begin position="1"/>
        <end position="25"/>
    </location>
</feature>
<feature type="region of interest" description="Disordered" evidence="3">
    <location>
        <begin position="604"/>
        <end position="635"/>
    </location>
</feature>
<feature type="compositionally biased region" description="Gly residues" evidence="3">
    <location>
        <begin position="8"/>
        <end position="20"/>
    </location>
</feature>
<feature type="compositionally biased region" description="Basic and acidic residues" evidence="3">
    <location>
        <begin position="619"/>
        <end position="628"/>
    </location>
</feature>
<feature type="active site" evidence="2">
    <location>
        <position position="269"/>
    </location>
</feature>
<feature type="active site" evidence="2">
    <location>
        <position position="422"/>
    </location>
</feature>
<feature type="binding site" evidence="2">
    <location>
        <position position="328"/>
    </location>
    <ligand>
        <name>substrate</name>
    </ligand>
</feature>
<feature type="binding site" evidence="2">
    <location>
        <position position="330"/>
    </location>
    <ligand>
        <name>substrate</name>
    </ligand>
</feature>
<feature type="sequence conflict" description="In Ref. 5; AK243206." evidence="4" ref="5">
    <original>F</original>
    <variation>S</variation>
    <location>
        <position position="394"/>
    </location>
</feature>
<organism>
    <name type="scientific">Oryza sativa subsp. japonica</name>
    <name type="common">Rice</name>
    <dbReference type="NCBI Taxonomy" id="39947"/>
    <lineage>
        <taxon>Eukaryota</taxon>
        <taxon>Viridiplantae</taxon>
        <taxon>Streptophyta</taxon>
        <taxon>Embryophyta</taxon>
        <taxon>Tracheophyta</taxon>
        <taxon>Spermatophyta</taxon>
        <taxon>Magnoliopsida</taxon>
        <taxon>Liliopsida</taxon>
        <taxon>Poales</taxon>
        <taxon>Poaceae</taxon>
        <taxon>BOP clade</taxon>
        <taxon>Oryzoideae</taxon>
        <taxon>Oryzeae</taxon>
        <taxon>Oryzinae</taxon>
        <taxon>Oryza</taxon>
        <taxon>Oryza sativa</taxon>
    </lineage>
</organism>
<dbReference type="EC" id="2.4.1.-"/>
<dbReference type="EMBL" id="AC108873">
    <property type="protein sequence ID" value="AAT44138.1"/>
    <property type="molecule type" value="Genomic_DNA"/>
</dbReference>
<dbReference type="EMBL" id="AP008211">
    <property type="protein sequence ID" value="BAF17926.1"/>
    <property type="status" value="ALT_SEQ"/>
    <property type="molecule type" value="Genomic_DNA"/>
</dbReference>
<dbReference type="EMBL" id="AP014961">
    <property type="protein sequence ID" value="BAS94838.1"/>
    <property type="molecule type" value="Genomic_DNA"/>
</dbReference>
<dbReference type="EMBL" id="AK243206">
    <property type="status" value="NOT_ANNOTATED_CDS"/>
    <property type="molecule type" value="mRNA"/>
</dbReference>
<dbReference type="EMBL" id="AF435642">
    <property type="protein sequence ID" value="AAL38527.1"/>
    <property type="molecule type" value="mRNA"/>
</dbReference>
<dbReference type="RefSeq" id="XP_015637340.1">
    <property type="nucleotide sequence ID" value="XM_015781854.1"/>
</dbReference>
<dbReference type="SMR" id="Q6L538"/>
<dbReference type="FunCoup" id="Q6L538">
    <property type="interactions" value="15"/>
</dbReference>
<dbReference type="STRING" id="39947.Q6L538"/>
<dbReference type="CAZy" id="GT2">
    <property type="family name" value="Glycosyltransferase Family 2"/>
</dbReference>
<dbReference type="PaxDb" id="39947-Q6L538"/>
<dbReference type="EnsemblPlants" id="Os05t0510800-01">
    <property type="protein sequence ID" value="Os05t0510800-01"/>
    <property type="gene ID" value="Os05g0510800"/>
</dbReference>
<dbReference type="Gramene" id="Os05t0510800-01">
    <property type="protein sequence ID" value="Os05t0510800-01"/>
    <property type="gene ID" value="Os05g0510800"/>
</dbReference>
<dbReference type="KEGG" id="dosa:Os05g0510800"/>
<dbReference type="eggNOG" id="ENOG502QTBF">
    <property type="taxonomic scope" value="Eukaryota"/>
</dbReference>
<dbReference type="HOGENOM" id="CLU_012856_1_0_1"/>
<dbReference type="InParanoid" id="Q6L538"/>
<dbReference type="OMA" id="DNPDWSM"/>
<dbReference type="OrthoDB" id="72851at2759"/>
<dbReference type="Proteomes" id="UP000000763">
    <property type="component" value="Chromosome 5"/>
</dbReference>
<dbReference type="Proteomes" id="UP000059680">
    <property type="component" value="Chromosome 5"/>
</dbReference>
<dbReference type="GO" id="GO:0005794">
    <property type="term" value="C:Golgi apparatus"/>
    <property type="evidence" value="ECO:0000318"/>
    <property type="project" value="GO_Central"/>
</dbReference>
<dbReference type="GO" id="GO:0000139">
    <property type="term" value="C:Golgi membrane"/>
    <property type="evidence" value="ECO:0007669"/>
    <property type="project" value="UniProtKB-SubCell"/>
</dbReference>
<dbReference type="GO" id="GO:0016757">
    <property type="term" value="F:glycosyltransferase activity"/>
    <property type="evidence" value="ECO:0000318"/>
    <property type="project" value="GO_Central"/>
</dbReference>
<dbReference type="GO" id="GO:0071555">
    <property type="term" value="P:cell wall organization"/>
    <property type="evidence" value="ECO:0007669"/>
    <property type="project" value="UniProtKB-KW"/>
</dbReference>
<dbReference type="FunFam" id="3.90.550.10:FF:000007">
    <property type="entry name" value="probable xyloglucan glycosyltransferase 5"/>
    <property type="match status" value="1"/>
</dbReference>
<dbReference type="Gene3D" id="3.90.550.10">
    <property type="entry name" value="Spore Coat Polysaccharide Biosynthesis Protein SpsA, Chain A"/>
    <property type="match status" value="1"/>
</dbReference>
<dbReference type="InterPro" id="IPR001173">
    <property type="entry name" value="Glyco_trans_2-like"/>
</dbReference>
<dbReference type="InterPro" id="IPR029044">
    <property type="entry name" value="Nucleotide-diphossugar_trans"/>
</dbReference>
<dbReference type="PANTHER" id="PTHR32044">
    <property type="entry name" value="GLUCOMANNAN 4-BETA-MANNOSYLTRANSFERASE 9"/>
    <property type="match status" value="1"/>
</dbReference>
<dbReference type="PANTHER" id="PTHR32044:SF16">
    <property type="entry name" value="XYLOGLUCAN GLYCOSYLTRANSFERASE 7-RELATED"/>
    <property type="match status" value="1"/>
</dbReference>
<dbReference type="Pfam" id="PF13632">
    <property type="entry name" value="Glyco_trans_2_3"/>
    <property type="match status" value="1"/>
</dbReference>
<dbReference type="SUPFAM" id="SSF53448">
    <property type="entry name" value="Nucleotide-diphospho-sugar transferases"/>
    <property type="match status" value="1"/>
</dbReference>